<comment type="function">
    <text evidence="1">NDH-1 shuttles electrons from NADH, via FMN and iron-sulfur (Fe-S) centers, to quinones in the respiratory chain. The immediate electron acceptor for the enzyme in this species is believed to be ubiquinone. Couples the redox reaction to proton translocation (for every two electrons transferred, four hydrogen ions are translocated across the cytoplasmic membrane), and thus conserves the redox energy in a proton gradient.</text>
</comment>
<comment type="catalytic activity">
    <reaction evidence="1">
        <text>a quinone + NADH + 5 H(+)(in) = a quinol + NAD(+) + 4 H(+)(out)</text>
        <dbReference type="Rhea" id="RHEA:57888"/>
        <dbReference type="ChEBI" id="CHEBI:15378"/>
        <dbReference type="ChEBI" id="CHEBI:24646"/>
        <dbReference type="ChEBI" id="CHEBI:57540"/>
        <dbReference type="ChEBI" id="CHEBI:57945"/>
        <dbReference type="ChEBI" id="CHEBI:132124"/>
    </reaction>
</comment>
<comment type="cofactor">
    <cofactor evidence="1">
        <name>[4Fe-4S] cluster</name>
        <dbReference type="ChEBI" id="CHEBI:49883"/>
    </cofactor>
    <text evidence="1">Binds 1 [4Fe-4S] cluster.</text>
</comment>
<comment type="subunit">
    <text evidence="1">NDH-1 is composed of 14 different subunits. Subunits NuoB, C, D, E, F, and G constitute the peripheral sector of the complex.</text>
</comment>
<comment type="subcellular location">
    <subcellularLocation>
        <location evidence="1">Cell inner membrane</location>
        <topology evidence="1">Peripheral membrane protein</topology>
        <orientation evidence="1">Cytoplasmic side</orientation>
    </subcellularLocation>
</comment>
<comment type="similarity">
    <text evidence="1">Belongs to the complex I 20 kDa subunit family.</text>
</comment>
<proteinExistence type="inferred from homology"/>
<protein>
    <recommendedName>
        <fullName evidence="1">NADH-quinone oxidoreductase subunit B</fullName>
        <ecNumber evidence="1">7.1.1.-</ecNumber>
    </recommendedName>
    <alternativeName>
        <fullName evidence="1">NADH dehydrogenase I subunit B</fullName>
    </alternativeName>
    <alternativeName>
        <fullName evidence="1">NDH-1 subunit B</fullName>
    </alternativeName>
</protein>
<accession>B8EIL8</accession>
<evidence type="ECO:0000255" key="1">
    <source>
        <dbReference type="HAMAP-Rule" id="MF_01356"/>
    </source>
</evidence>
<organism>
    <name type="scientific">Methylocella silvestris (strain DSM 15510 / CIP 108128 / LMG 27833 / NCIMB 13906 / BL2)</name>
    <dbReference type="NCBI Taxonomy" id="395965"/>
    <lineage>
        <taxon>Bacteria</taxon>
        <taxon>Pseudomonadati</taxon>
        <taxon>Pseudomonadota</taxon>
        <taxon>Alphaproteobacteria</taxon>
        <taxon>Hyphomicrobiales</taxon>
        <taxon>Beijerinckiaceae</taxon>
        <taxon>Methylocella</taxon>
    </lineage>
</organism>
<sequence length="187" mass="20637">MGLTPAPQEGLVINPATDRPLAANDPYFLSINDKLADKGFLVTSTDELINWARTGSLMWMTFGLACCAVEMMQASMPRYDVERFGFAPRGSPRQSDVMIVAGTLTNKMAPALRKVYDQMPEPRYVISMGSCANGGGYYHYSYSVVRGCDRIVPVDIYVPGCPPSAEALLYGILLLQRKIRRTGTIER</sequence>
<name>NUOB_METSB</name>
<reference key="1">
    <citation type="journal article" date="2010" name="J. Bacteriol.">
        <title>Complete genome sequence of the aerobic facultative methanotroph Methylocella silvestris BL2.</title>
        <authorList>
            <person name="Chen Y."/>
            <person name="Crombie A."/>
            <person name="Rahman M.T."/>
            <person name="Dedysh S.N."/>
            <person name="Liesack W."/>
            <person name="Stott M.B."/>
            <person name="Alam M."/>
            <person name="Theisen A.R."/>
            <person name="Murrell J.C."/>
            <person name="Dunfield P.F."/>
        </authorList>
    </citation>
    <scope>NUCLEOTIDE SEQUENCE [LARGE SCALE GENOMIC DNA]</scope>
    <source>
        <strain>DSM 15510 / CIP 108128 / LMG 27833 / NCIMB 13906 / BL2</strain>
    </source>
</reference>
<feature type="chain" id="PRO_0000376272" description="NADH-quinone oxidoreductase subunit B">
    <location>
        <begin position="1"/>
        <end position="187"/>
    </location>
</feature>
<feature type="binding site" evidence="1">
    <location>
        <position position="66"/>
    </location>
    <ligand>
        <name>[4Fe-4S] cluster</name>
        <dbReference type="ChEBI" id="CHEBI:49883"/>
    </ligand>
</feature>
<feature type="binding site" evidence="1">
    <location>
        <position position="67"/>
    </location>
    <ligand>
        <name>[4Fe-4S] cluster</name>
        <dbReference type="ChEBI" id="CHEBI:49883"/>
    </ligand>
</feature>
<feature type="binding site" evidence="1">
    <location>
        <position position="131"/>
    </location>
    <ligand>
        <name>[4Fe-4S] cluster</name>
        <dbReference type="ChEBI" id="CHEBI:49883"/>
    </ligand>
</feature>
<feature type="binding site" evidence="1">
    <location>
        <position position="161"/>
    </location>
    <ligand>
        <name>[4Fe-4S] cluster</name>
        <dbReference type="ChEBI" id="CHEBI:49883"/>
    </ligand>
</feature>
<keyword id="KW-0004">4Fe-4S</keyword>
<keyword id="KW-0997">Cell inner membrane</keyword>
<keyword id="KW-1003">Cell membrane</keyword>
<keyword id="KW-0408">Iron</keyword>
<keyword id="KW-0411">Iron-sulfur</keyword>
<keyword id="KW-0472">Membrane</keyword>
<keyword id="KW-0479">Metal-binding</keyword>
<keyword id="KW-0520">NAD</keyword>
<keyword id="KW-0874">Quinone</keyword>
<keyword id="KW-1185">Reference proteome</keyword>
<keyword id="KW-1278">Translocase</keyword>
<keyword id="KW-0813">Transport</keyword>
<keyword id="KW-0830">Ubiquinone</keyword>
<dbReference type="EC" id="7.1.1.-" evidence="1"/>
<dbReference type="EMBL" id="CP001280">
    <property type="protein sequence ID" value="ACK51835.1"/>
    <property type="molecule type" value="Genomic_DNA"/>
</dbReference>
<dbReference type="RefSeq" id="WP_012591904.1">
    <property type="nucleotide sequence ID" value="NC_011666.1"/>
</dbReference>
<dbReference type="SMR" id="B8EIL8"/>
<dbReference type="STRING" id="395965.Msil_2919"/>
<dbReference type="KEGG" id="msl:Msil_2919"/>
<dbReference type="eggNOG" id="COG0377">
    <property type="taxonomic scope" value="Bacteria"/>
</dbReference>
<dbReference type="HOGENOM" id="CLU_055737_7_3_5"/>
<dbReference type="Proteomes" id="UP000002257">
    <property type="component" value="Chromosome"/>
</dbReference>
<dbReference type="GO" id="GO:0005886">
    <property type="term" value="C:plasma membrane"/>
    <property type="evidence" value="ECO:0007669"/>
    <property type="project" value="UniProtKB-SubCell"/>
</dbReference>
<dbReference type="GO" id="GO:0045271">
    <property type="term" value="C:respiratory chain complex I"/>
    <property type="evidence" value="ECO:0007669"/>
    <property type="project" value="TreeGrafter"/>
</dbReference>
<dbReference type="GO" id="GO:0051539">
    <property type="term" value="F:4 iron, 4 sulfur cluster binding"/>
    <property type="evidence" value="ECO:0007669"/>
    <property type="project" value="UniProtKB-KW"/>
</dbReference>
<dbReference type="GO" id="GO:0005506">
    <property type="term" value="F:iron ion binding"/>
    <property type="evidence" value="ECO:0007669"/>
    <property type="project" value="UniProtKB-UniRule"/>
</dbReference>
<dbReference type="GO" id="GO:0008137">
    <property type="term" value="F:NADH dehydrogenase (ubiquinone) activity"/>
    <property type="evidence" value="ECO:0007669"/>
    <property type="project" value="InterPro"/>
</dbReference>
<dbReference type="GO" id="GO:0050136">
    <property type="term" value="F:NADH:ubiquinone reductase (non-electrogenic) activity"/>
    <property type="evidence" value="ECO:0007669"/>
    <property type="project" value="UniProtKB-UniRule"/>
</dbReference>
<dbReference type="GO" id="GO:0048038">
    <property type="term" value="F:quinone binding"/>
    <property type="evidence" value="ECO:0007669"/>
    <property type="project" value="UniProtKB-KW"/>
</dbReference>
<dbReference type="GO" id="GO:0009060">
    <property type="term" value="P:aerobic respiration"/>
    <property type="evidence" value="ECO:0007669"/>
    <property type="project" value="TreeGrafter"/>
</dbReference>
<dbReference type="GO" id="GO:0015990">
    <property type="term" value="P:electron transport coupled proton transport"/>
    <property type="evidence" value="ECO:0007669"/>
    <property type="project" value="TreeGrafter"/>
</dbReference>
<dbReference type="FunFam" id="3.40.50.12280:FF:000001">
    <property type="entry name" value="NADH-quinone oxidoreductase subunit B 2"/>
    <property type="match status" value="1"/>
</dbReference>
<dbReference type="Gene3D" id="3.40.50.12280">
    <property type="match status" value="1"/>
</dbReference>
<dbReference type="HAMAP" id="MF_01356">
    <property type="entry name" value="NDH1_NuoB"/>
    <property type="match status" value="1"/>
</dbReference>
<dbReference type="InterPro" id="IPR006137">
    <property type="entry name" value="NADH_UbQ_OxRdtase-like_20kDa"/>
</dbReference>
<dbReference type="InterPro" id="IPR006138">
    <property type="entry name" value="NADH_UQ_OxRdtase_20Kd_su"/>
</dbReference>
<dbReference type="NCBIfam" id="TIGR01957">
    <property type="entry name" value="nuoB_fam"/>
    <property type="match status" value="1"/>
</dbReference>
<dbReference type="NCBIfam" id="NF005012">
    <property type="entry name" value="PRK06411.1"/>
    <property type="match status" value="1"/>
</dbReference>
<dbReference type="PANTHER" id="PTHR11995">
    <property type="entry name" value="NADH DEHYDROGENASE"/>
    <property type="match status" value="1"/>
</dbReference>
<dbReference type="PANTHER" id="PTHR11995:SF14">
    <property type="entry name" value="NADH DEHYDROGENASE [UBIQUINONE] IRON-SULFUR PROTEIN 7, MITOCHONDRIAL"/>
    <property type="match status" value="1"/>
</dbReference>
<dbReference type="Pfam" id="PF01058">
    <property type="entry name" value="Oxidored_q6"/>
    <property type="match status" value="1"/>
</dbReference>
<dbReference type="SUPFAM" id="SSF56770">
    <property type="entry name" value="HydA/Nqo6-like"/>
    <property type="match status" value="1"/>
</dbReference>
<dbReference type="PROSITE" id="PS01150">
    <property type="entry name" value="COMPLEX1_20K"/>
    <property type="match status" value="1"/>
</dbReference>
<gene>
    <name evidence="1" type="primary">nuoB</name>
    <name type="ordered locus">Msil_2919</name>
</gene>